<dbReference type="EMBL" id="AE000516">
    <property type="protein sequence ID" value="AAK44580.1"/>
    <property type="molecule type" value="Genomic_DNA"/>
</dbReference>
<dbReference type="PIR" id="H70573">
    <property type="entry name" value="H70573"/>
</dbReference>
<dbReference type="RefSeq" id="WP_003401747.1">
    <property type="nucleotide sequence ID" value="NZ_KK341227.1"/>
</dbReference>
<dbReference type="GeneID" id="45424309"/>
<dbReference type="KEGG" id="mtc:MT0357.1"/>
<dbReference type="PATRIC" id="fig|83331.31.peg.378"/>
<dbReference type="HOGENOM" id="CLU_031445_2_0_11"/>
<dbReference type="Proteomes" id="UP000001020">
    <property type="component" value="Chromosome"/>
</dbReference>
<dbReference type="Gene3D" id="3.40.50.300">
    <property type="entry name" value="P-loop containing nucleotide triphosphate hydrolases"/>
    <property type="match status" value="1"/>
</dbReference>
<dbReference type="InterPro" id="IPR045063">
    <property type="entry name" value="Dynamin_N"/>
</dbReference>
<dbReference type="InterPro" id="IPR027417">
    <property type="entry name" value="P-loop_NTPase"/>
</dbReference>
<dbReference type="InterPro" id="IPR051943">
    <property type="entry name" value="TRAFAC_Dynamin-like_GTPase"/>
</dbReference>
<dbReference type="PANTHER" id="PTHR43681:SF1">
    <property type="entry name" value="SARCALUMENIN"/>
    <property type="match status" value="1"/>
</dbReference>
<dbReference type="PANTHER" id="PTHR43681">
    <property type="entry name" value="TRANSMEMBRANE GTPASE FZO"/>
    <property type="match status" value="1"/>
</dbReference>
<dbReference type="Pfam" id="PF00350">
    <property type="entry name" value="Dynamin_N"/>
    <property type="match status" value="1"/>
</dbReference>
<dbReference type="SUPFAM" id="SSF52540">
    <property type="entry name" value="P-loop containing nucleoside triphosphate hydrolases"/>
    <property type="match status" value="1"/>
</dbReference>
<organism>
    <name type="scientific">Mycobacterium tuberculosis (strain CDC 1551 / Oshkosh)</name>
    <dbReference type="NCBI Taxonomy" id="83331"/>
    <lineage>
        <taxon>Bacteria</taxon>
        <taxon>Bacillati</taxon>
        <taxon>Actinomycetota</taxon>
        <taxon>Actinomycetes</taxon>
        <taxon>Mycobacteriales</taxon>
        <taxon>Mycobacteriaceae</taxon>
        <taxon>Mycobacterium</taxon>
        <taxon>Mycobacterium tuberculosis complex</taxon>
    </lineage>
</organism>
<feature type="chain" id="PRO_0000427869" description="Isoniazid-induced protein IniC">
    <location>
        <begin position="1"/>
        <end position="493"/>
    </location>
</feature>
<name>INIC_MYCTO</name>
<gene>
    <name type="primary">iniC</name>
    <name type="ordered locus">MT0357.1</name>
</gene>
<protein>
    <recommendedName>
        <fullName>Isoniazid-induced protein IniC</fullName>
    </recommendedName>
</protein>
<sequence>MSTSDRVRAILHATIQAYRGAPAYRQRGDVFCQLDRIGARLAEPLRIALAGTLKAGKSTLVNALVGDDIAPTDATEATRIVTWFRHGPTPRVTANHRGGRRANVPITRRGGLSFDLRRINPAELIDLEVEWPAEELIDATIVDTPGTSSLACDASERTLRLLVPADGVPRVDAVVFLLRTLNAADVALLKQIGGLVGGSVGALGIIGVASRADEIGAGRIDAMLSANDVAKRFTRELNQMGICQAVVPVSGLLALTARTLRQTEFIALRKLAGAERTELNRALLSVDRFVRRDSPLPVDAGIRAQLLERFGMFGIRMSIAVLAAGVTDSTGLAAELLERSGLVALRNVIDQQFAQRSDMLKAHTALVSLRRFVQTHPVPATPYVIADIDPLLADTHAFEELRMLSLLPSRATTLNDDEIASLRRIIGGSGTSAAARLGLDPANSREAPRAALAAAQHWRRRAAHPLNDPFTTRACRAAVRSAEAMVAEFSARR</sequence>
<accession>P9WJ94</accession>
<accession>L0T663</accession>
<accession>O06294</accession>
<accession>Q7D9Z5</accession>
<proteinExistence type="predicted"/>
<reference key="1">
    <citation type="journal article" date="2002" name="J. Bacteriol.">
        <title>Whole-genome comparison of Mycobacterium tuberculosis clinical and laboratory strains.</title>
        <authorList>
            <person name="Fleischmann R.D."/>
            <person name="Alland D."/>
            <person name="Eisen J.A."/>
            <person name="Carpenter L."/>
            <person name="White O."/>
            <person name="Peterson J.D."/>
            <person name="DeBoy R.T."/>
            <person name="Dodson R.J."/>
            <person name="Gwinn M.L."/>
            <person name="Haft D.H."/>
            <person name="Hickey E.K."/>
            <person name="Kolonay J.F."/>
            <person name="Nelson W.C."/>
            <person name="Umayam L.A."/>
            <person name="Ermolaeva M.D."/>
            <person name="Salzberg S.L."/>
            <person name="Delcher A."/>
            <person name="Utterback T.R."/>
            <person name="Weidman J.F."/>
            <person name="Khouri H.M."/>
            <person name="Gill J."/>
            <person name="Mikula A."/>
            <person name="Bishai W."/>
            <person name="Jacobs W.R. Jr."/>
            <person name="Venter J.C."/>
            <person name="Fraser C.M."/>
        </authorList>
    </citation>
    <scope>NUCLEOTIDE SEQUENCE [LARGE SCALE GENOMIC DNA]</scope>
    <source>
        <strain>CDC 1551 / Oshkosh</strain>
    </source>
</reference>
<keyword id="KW-1185">Reference proteome</keyword>